<comment type="similarity">
    <text evidence="1">Belongs to the UPF0342 family.</text>
</comment>
<accession>A4W244</accession>
<evidence type="ECO:0000255" key="1">
    <source>
        <dbReference type="HAMAP-Rule" id="MF_01526"/>
    </source>
</evidence>
<protein>
    <recommendedName>
        <fullName evidence="1">UPF0342 protein SSU98_1275</fullName>
    </recommendedName>
</protein>
<sequence>MSTNIYDIANELERAIRNLPEYKAVEAVKVSVEGNSEAKEILESYISFQKEIQSKLQAGEIPTEADQKKMLDFNKKVQGNPLLTEYFSKQQQLGTYVADLERIIFKPLNELL</sequence>
<gene>
    <name type="ordered locus">SSU98_1275</name>
</gene>
<organism>
    <name type="scientific">Streptococcus suis (strain 98HAH33)</name>
    <dbReference type="NCBI Taxonomy" id="391296"/>
    <lineage>
        <taxon>Bacteria</taxon>
        <taxon>Bacillati</taxon>
        <taxon>Bacillota</taxon>
        <taxon>Bacilli</taxon>
        <taxon>Lactobacillales</taxon>
        <taxon>Streptococcaceae</taxon>
        <taxon>Streptococcus</taxon>
    </lineage>
</organism>
<reference key="1">
    <citation type="journal article" date="2007" name="PLoS ONE">
        <title>A glimpse of streptococcal toxic shock syndrome from comparative genomics of S. suis 2 Chinese isolates.</title>
        <authorList>
            <person name="Chen C."/>
            <person name="Tang J."/>
            <person name="Dong W."/>
            <person name="Wang C."/>
            <person name="Feng Y."/>
            <person name="Wang J."/>
            <person name="Zheng F."/>
            <person name="Pan X."/>
            <person name="Liu D."/>
            <person name="Li M."/>
            <person name="Song Y."/>
            <person name="Zhu X."/>
            <person name="Sun H."/>
            <person name="Feng T."/>
            <person name="Guo Z."/>
            <person name="Ju A."/>
            <person name="Ge J."/>
            <person name="Dong Y."/>
            <person name="Sun W."/>
            <person name="Jiang Y."/>
            <person name="Wang J."/>
            <person name="Yan J."/>
            <person name="Yang H."/>
            <person name="Wang X."/>
            <person name="Gao G.F."/>
            <person name="Yang R."/>
            <person name="Wang J."/>
            <person name="Yu J."/>
        </authorList>
    </citation>
    <scope>NUCLEOTIDE SEQUENCE [LARGE SCALE GENOMIC DNA]</scope>
    <source>
        <strain>98HAH33</strain>
    </source>
</reference>
<feature type="chain" id="PRO_0000296978" description="UPF0342 protein SSU98_1275">
    <location>
        <begin position="1"/>
        <end position="112"/>
    </location>
</feature>
<proteinExistence type="inferred from homology"/>
<dbReference type="EMBL" id="CP000408">
    <property type="protein sequence ID" value="ABP92433.1"/>
    <property type="molecule type" value="Genomic_DNA"/>
</dbReference>
<dbReference type="SMR" id="A4W244"/>
<dbReference type="KEGG" id="ssv:SSU98_1275"/>
<dbReference type="HOGENOM" id="CLU_140243_2_0_9"/>
<dbReference type="BioCyc" id="SSUI391296:GI2E-1328-MONOMER"/>
<dbReference type="Gene3D" id="1.20.1500.10">
    <property type="entry name" value="YheA/YmcA-like"/>
    <property type="match status" value="1"/>
</dbReference>
<dbReference type="HAMAP" id="MF_01526">
    <property type="entry name" value="UPF0342"/>
    <property type="match status" value="1"/>
</dbReference>
<dbReference type="InterPro" id="IPR010368">
    <property type="entry name" value="Com_YlbF"/>
</dbReference>
<dbReference type="InterPro" id="IPR023378">
    <property type="entry name" value="YheA/YmcA-like_dom_sf"/>
</dbReference>
<dbReference type="NCBIfam" id="NF010209">
    <property type="entry name" value="PRK13676.1-1"/>
    <property type="match status" value="1"/>
</dbReference>
<dbReference type="Pfam" id="PF06133">
    <property type="entry name" value="Com_YlbF"/>
    <property type="match status" value="1"/>
</dbReference>
<dbReference type="SUPFAM" id="SSF158622">
    <property type="entry name" value="YheA/YmcA-like"/>
    <property type="match status" value="1"/>
</dbReference>
<name>Y1275_STRS2</name>